<evidence type="ECO:0000305" key="1"/>
<evidence type="ECO:0007829" key="2">
    <source>
        <dbReference type="PDB" id="3WZI"/>
    </source>
</evidence>
<evidence type="ECO:0007829" key="3">
    <source>
        <dbReference type="PDB" id="6VJG"/>
    </source>
</evidence>
<sequence>MKFAVIDRKNFTLIHFEIEKPIKPEILKEIEIPSVDTRKGVVISGRGPIWLHCFLAHKYHHTPFVAVYDPRLGAVVVQSHSELREGDVIDVVVEEILKGGVRHV</sequence>
<feature type="chain" id="PRO_0000128067" description="Uncharacterized protein AF_1864">
    <location>
        <begin position="1"/>
        <end position="104"/>
    </location>
</feature>
<feature type="strand" evidence="3">
    <location>
        <begin position="2"/>
        <end position="7"/>
    </location>
</feature>
<feature type="strand" evidence="3">
    <location>
        <begin position="9"/>
        <end position="17"/>
    </location>
</feature>
<feature type="helix" evidence="3">
    <location>
        <begin position="24"/>
        <end position="28"/>
    </location>
</feature>
<feature type="strand" evidence="3">
    <location>
        <begin position="39"/>
        <end position="45"/>
    </location>
</feature>
<feature type="helix" evidence="3">
    <location>
        <begin position="49"/>
        <end position="58"/>
    </location>
</feature>
<feature type="turn" evidence="3">
    <location>
        <begin position="59"/>
        <end position="61"/>
    </location>
</feature>
<feature type="strand" evidence="3">
    <location>
        <begin position="62"/>
        <end position="69"/>
    </location>
</feature>
<feature type="turn" evidence="3">
    <location>
        <begin position="70"/>
        <end position="72"/>
    </location>
</feature>
<feature type="strand" evidence="3">
    <location>
        <begin position="73"/>
        <end position="82"/>
    </location>
</feature>
<feature type="helix" evidence="3">
    <location>
        <begin position="93"/>
        <end position="96"/>
    </location>
</feature>
<feature type="turn" evidence="2">
    <location>
        <begin position="97"/>
        <end position="99"/>
    </location>
</feature>
<feature type="strand" evidence="3">
    <location>
        <begin position="101"/>
        <end position="104"/>
    </location>
</feature>
<keyword id="KW-0002">3D-structure</keyword>
<keyword id="KW-1185">Reference proteome</keyword>
<proteinExistence type="evidence at protein level"/>
<name>Y1864_ARCFU</name>
<reference key="1">
    <citation type="journal article" date="1997" name="Nature">
        <title>The complete genome sequence of the hyperthermophilic, sulphate-reducing archaeon Archaeoglobus fulgidus.</title>
        <authorList>
            <person name="Klenk H.-P."/>
            <person name="Clayton R.A."/>
            <person name="Tomb J.-F."/>
            <person name="White O."/>
            <person name="Nelson K.E."/>
            <person name="Ketchum K.A."/>
            <person name="Dodson R.J."/>
            <person name="Gwinn M.L."/>
            <person name="Hickey E.K."/>
            <person name="Peterson J.D."/>
            <person name="Richardson D.L."/>
            <person name="Kerlavage A.R."/>
            <person name="Graham D.E."/>
            <person name="Kyrpides N.C."/>
            <person name="Fleischmann R.D."/>
            <person name="Quackenbush J."/>
            <person name="Lee N.H."/>
            <person name="Sutton G.G."/>
            <person name="Gill S.R."/>
            <person name="Kirkness E.F."/>
            <person name="Dougherty B.A."/>
            <person name="McKenney K."/>
            <person name="Adams M.D."/>
            <person name="Loftus B.J."/>
            <person name="Peterson S.N."/>
            <person name="Reich C.I."/>
            <person name="McNeil L.K."/>
            <person name="Badger J.H."/>
            <person name="Glodek A."/>
            <person name="Zhou L."/>
            <person name="Overbeek R."/>
            <person name="Gocayne J.D."/>
            <person name="Weidman J.F."/>
            <person name="McDonald L.A."/>
            <person name="Utterback T.R."/>
            <person name="Cotton M.D."/>
            <person name="Spriggs T."/>
            <person name="Artiach P."/>
            <person name="Kaine B.P."/>
            <person name="Sykes S.M."/>
            <person name="Sadow P.W."/>
            <person name="D'Andrea K.P."/>
            <person name="Bowman C."/>
            <person name="Fujii C."/>
            <person name="Garland S.A."/>
            <person name="Mason T.M."/>
            <person name="Olsen G.J."/>
            <person name="Fraser C.M."/>
            <person name="Smith H.O."/>
            <person name="Woese C.R."/>
            <person name="Venter J.C."/>
        </authorList>
    </citation>
    <scope>NUCLEOTIDE SEQUENCE [LARGE SCALE GENOMIC DNA]</scope>
    <source>
        <strain>ATCC 49558 / DSM 4304 / JCM 9628 / NBRC 100126 / VC-16</strain>
    </source>
</reference>
<accession>O28415</accession>
<comment type="similarity">
    <text evidence="1">To A.aeolicus AQ_377.</text>
</comment>
<protein>
    <recommendedName>
        <fullName>Uncharacterized protein AF_1864</fullName>
    </recommendedName>
</protein>
<organism>
    <name type="scientific">Archaeoglobus fulgidus (strain ATCC 49558 / DSM 4304 / JCM 9628 / NBRC 100126 / VC-16)</name>
    <dbReference type="NCBI Taxonomy" id="224325"/>
    <lineage>
        <taxon>Archaea</taxon>
        <taxon>Methanobacteriati</taxon>
        <taxon>Methanobacteriota</taxon>
        <taxon>Archaeoglobi</taxon>
        <taxon>Archaeoglobales</taxon>
        <taxon>Archaeoglobaceae</taxon>
        <taxon>Archaeoglobus</taxon>
    </lineage>
</organism>
<gene>
    <name type="ordered locus">AF_1864</name>
</gene>
<dbReference type="EMBL" id="AE000782">
    <property type="protein sequence ID" value="AAB89396.1"/>
    <property type="molecule type" value="Genomic_DNA"/>
</dbReference>
<dbReference type="PIR" id="G69482">
    <property type="entry name" value="G69482"/>
</dbReference>
<dbReference type="PDB" id="3WZG">
    <property type="method" value="X-ray"/>
    <property type="resolution" value="2.95 A"/>
    <property type="chains" value="A/B=2-104"/>
</dbReference>
<dbReference type="PDB" id="3WZH">
    <property type="method" value="X-ray"/>
    <property type="resolution" value="3.31 A"/>
    <property type="chains" value="A/B=2-104"/>
</dbReference>
<dbReference type="PDB" id="3WZI">
    <property type="method" value="X-ray"/>
    <property type="resolution" value="2.90 A"/>
    <property type="chains" value="A/B=1-104"/>
</dbReference>
<dbReference type="PDB" id="6VJG">
    <property type="method" value="X-ray"/>
    <property type="resolution" value="1.80 A"/>
    <property type="chains" value="A=1-104"/>
</dbReference>
<dbReference type="PDB" id="6YUD">
    <property type="method" value="X-ray"/>
    <property type="resolution" value="1.84 A"/>
    <property type="chains" value="A/B/C/D/E/F/G/H/I/J=1-104"/>
</dbReference>
<dbReference type="PDBsum" id="3WZG"/>
<dbReference type="PDBsum" id="3WZH"/>
<dbReference type="PDBsum" id="3WZI"/>
<dbReference type="PDBsum" id="6VJG"/>
<dbReference type="PDBsum" id="6YUD"/>
<dbReference type="SMR" id="O28415"/>
<dbReference type="STRING" id="224325.AF_1864"/>
<dbReference type="PaxDb" id="224325-AF_1864"/>
<dbReference type="EnsemblBacteria" id="AAB89396">
    <property type="protein sequence ID" value="AAB89396"/>
    <property type="gene ID" value="AF_1864"/>
</dbReference>
<dbReference type="KEGG" id="afu:AF_1864"/>
<dbReference type="eggNOG" id="arCOG07528">
    <property type="taxonomic scope" value="Archaea"/>
</dbReference>
<dbReference type="HOGENOM" id="CLU_172322_0_0_2"/>
<dbReference type="OrthoDB" id="146007at2157"/>
<dbReference type="EvolutionaryTrace" id="O28415"/>
<dbReference type="Proteomes" id="UP000002199">
    <property type="component" value="Chromosome"/>
</dbReference>
<dbReference type="InterPro" id="IPR013409">
    <property type="entry name" value="CRISPR-assoc_prot_Crn3/Csx3"/>
</dbReference>
<dbReference type="NCBIfam" id="TIGR02579">
    <property type="entry name" value="cas_csx3"/>
    <property type="match status" value="1"/>
</dbReference>
<dbReference type="Pfam" id="PF09620">
    <property type="entry name" value="Cas_csx3"/>
    <property type="match status" value="1"/>
</dbReference>